<gene>
    <name evidence="1" type="primary">dapA</name>
    <name type="ordered locus">NMB0929</name>
</gene>
<dbReference type="EC" id="4.3.3.7" evidence="1"/>
<dbReference type="EMBL" id="AE002098">
    <property type="protein sequence ID" value="AAF41336.1"/>
    <property type="molecule type" value="Genomic_DNA"/>
</dbReference>
<dbReference type="PIR" id="D81141">
    <property type="entry name" value="D81141"/>
</dbReference>
<dbReference type="RefSeq" id="NP_273968.1">
    <property type="nucleotide sequence ID" value="NC_003112.2"/>
</dbReference>
<dbReference type="RefSeq" id="WP_002225337.1">
    <property type="nucleotide sequence ID" value="NC_003112.2"/>
</dbReference>
<dbReference type="PDB" id="3FLU">
    <property type="method" value="X-ray"/>
    <property type="resolution" value="2.00 A"/>
    <property type="chains" value="A/B/C/D=1-291"/>
</dbReference>
<dbReference type="PDBsum" id="3FLU"/>
<dbReference type="SMR" id="Q9JZR4"/>
<dbReference type="FunCoup" id="Q9JZR4">
    <property type="interactions" value="488"/>
</dbReference>
<dbReference type="STRING" id="122586.NMB0929"/>
<dbReference type="PaxDb" id="122586-NMB0929"/>
<dbReference type="KEGG" id="nme:NMB0929"/>
<dbReference type="PATRIC" id="fig|122586.8.peg.1178"/>
<dbReference type="HOGENOM" id="CLU_049343_7_1_4"/>
<dbReference type="InParanoid" id="Q9JZR4"/>
<dbReference type="OrthoDB" id="9782828at2"/>
<dbReference type="BRENDA" id="4.3.3.7">
    <property type="organism ID" value="3593"/>
</dbReference>
<dbReference type="UniPathway" id="UPA00034">
    <property type="reaction ID" value="UER00017"/>
</dbReference>
<dbReference type="EvolutionaryTrace" id="Q9JZR4"/>
<dbReference type="Proteomes" id="UP000000425">
    <property type="component" value="Chromosome"/>
</dbReference>
<dbReference type="GO" id="GO:0005829">
    <property type="term" value="C:cytosol"/>
    <property type="evidence" value="ECO:0000318"/>
    <property type="project" value="GO_Central"/>
</dbReference>
<dbReference type="GO" id="GO:0008840">
    <property type="term" value="F:4-hydroxy-tetrahydrodipicolinate synthase activity"/>
    <property type="evidence" value="ECO:0000318"/>
    <property type="project" value="GO_Central"/>
</dbReference>
<dbReference type="GO" id="GO:0019877">
    <property type="term" value="P:diaminopimelate biosynthetic process"/>
    <property type="evidence" value="ECO:0007669"/>
    <property type="project" value="UniProtKB-UniRule"/>
</dbReference>
<dbReference type="GO" id="GO:0009089">
    <property type="term" value="P:lysine biosynthetic process via diaminopimelate"/>
    <property type="evidence" value="ECO:0007669"/>
    <property type="project" value="UniProtKB-UniRule"/>
</dbReference>
<dbReference type="CDD" id="cd00950">
    <property type="entry name" value="DHDPS"/>
    <property type="match status" value="1"/>
</dbReference>
<dbReference type="Gene3D" id="3.20.20.70">
    <property type="entry name" value="Aldolase class I"/>
    <property type="match status" value="1"/>
</dbReference>
<dbReference type="HAMAP" id="MF_00418">
    <property type="entry name" value="DapA"/>
    <property type="match status" value="1"/>
</dbReference>
<dbReference type="InterPro" id="IPR013785">
    <property type="entry name" value="Aldolase_TIM"/>
</dbReference>
<dbReference type="InterPro" id="IPR005263">
    <property type="entry name" value="DapA"/>
</dbReference>
<dbReference type="InterPro" id="IPR002220">
    <property type="entry name" value="DapA-like"/>
</dbReference>
<dbReference type="InterPro" id="IPR020625">
    <property type="entry name" value="Schiff_base-form_aldolases_AS"/>
</dbReference>
<dbReference type="InterPro" id="IPR020624">
    <property type="entry name" value="Schiff_base-form_aldolases_CS"/>
</dbReference>
<dbReference type="NCBIfam" id="TIGR00674">
    <property type="entry name" value="dapA"/>
    <property type="match status" value="1"/>
</dbReference>
<dbReference type="PANTHER" id="PTHR12128:SF66">
    <property type="entry name" value="4-HYDROXY-2-OXOGLUTARATE ALDOLASE, MITOCHONDRIAL"/>
    <property type="match status" value="1"/>
</dbReference>
<dbReference type="PANTHER" id="PTHR12128">
    <property type="entry name" value="DIHYDRODIPICOLINATE SYNTHASE"/>
    <property type="match status" value="1"/>
</dbReference>
<dbReference type="Pfam" id="PF00701">
    <property type="entry name" value="DHDPS"/>
    <property type="match status" value="1"/>
</dbReference>
<dbReference type="PIRSF" id="PIRSF001365">
    <property type="entry name" value="DHDPS"/>
    <property type="match status" value="1"/>
</dbReference>
<dbReference type="PRINTS" id="PR00146">
    <property type="entry name" value="DHPICSNTHASE"/>
</dbReference>
<dbReference type="SMART" id="SM01130">
    <property type="entry name" value="DHDPS"/>
    <property type="match status" value="1"/>
</dbReference>
<dbReference type="SUPFAM" id="SSF51569">
    <property type="entry name" value="Aldolase"/>
    <property type="match status" value="1"/>
</dbReference>
<dbReference type="PROSITE" id="PS00665">
    <property type="entry name" value="DHDPS_1"/>
    <property type="match status" value="1"/>
</dbReference>
<dbReference type="PROSITE" id="PS00666">
    <property type="entry name" value="DHDPS_2"/>
    <property type="match status" value="1"/>
</dbReference>
<comment type="function">
    <text evidence="4">Catalyzes the condensation of (S)-aspartate-beta-semialdehyde [(S)-ASA] and pyruvate to 4-hydroxy-tetrahydrodipicolinate (HTPA).</text>
</comment>
<comment type="catalytic activity">
    <reaction evidence="1">
        <text>L-aspartate 4-semialdehyde + pyruvate = (2S,4S)-4-hydroxy-2,3,4,5-tetrahydrodipicolinate + H2O + H(+)</text>
        <dbReference type="Rhea" id="RHEA:34171"/>
        <dbReference type="ChEBI" id="CHEBI:15361"/>
        <dbReference type="ChEBI" id="CHEBI:15377"/>
        <dbReference type="ChEBI" id="CHEBI:15378"/>
        <dbReference type="ChEBI" id="CHEBI:67139"/>
        <dbReference type="ChEBI" id="CHEBI:537519"/>
        <dbReference type="EC" id="4.3.3.7"/>
    </reaction>
</comment>
<comment type="activity regulation">
    <text evidence="2">Is allosterically feedback inhibited by lysine; the N.meningitidis enzyme is significantly more sensitive to lysine than the E.coli enzyme. Shows substrate inhibition by (S)-ASA, with a Ki of 1.7 mM.</text>
</comment>
<comment type="biophysicochemical properties">
    <kinetics>
        <KM evidence="2">0.5 mM for pyruvate</KM>
        <KM evidence="2">0.052 mM for L-aspartate-4-semialdehyde</KM>
        <text>kcat is 46.7 sec(-1).</text>
    </kinetics>
</comment>
<comment type="pathway">
    <text evidence="1">Amino-acid biosynthesis; L-lysine biosynthesis via DAP pathway; (S)-tetrahydrodipicolinate from L-aspartate: step 3/4.</text>
</comment>
<comment type="subunit">
    <text evidence="2">Homotetramer.</text>
</comment>
<comment type="subcellular location">
    <subcellularLocation>
        <location evidence="1">Cytoplasm</location>
    </subcellularLocation>
</comment>
<comment type="similarity">
    <text evidence="1">Belongs to the DapA family.</text>
</comment>
<comment type="caution">
    <text evidence="3">Was originally thought to be a dihydrodipicolinate synthase (DHDPS), catalyzing the condensation of (S)-aspartate-beta-semialdehyde [(S)-ASA] and pyruvate to dihydrodipicolinate (DHDP). However, it was shown in E.coli that the product of the enzymatic reaction is not dihydrodipicolinate but in fact (4S)-4-hydroxy-2,3,4,5-tetrahydro-(2S)-dipicolinic acid (HTPA), and that the consecutive dehydration reaction leading to DHDP is not spontaneous but catalyzed by DapB.</text>
</comment>
<keyword id="KW-0002">3D-structure</keyword>
<keyword id="KW-0021">Allosteric enzyme</keyword>
<keyword id="KW-0028">Amino-acid biosynthesis</keyword>
<keyword id="KW-0963">Cytoplasm</keyword>
<keyword id="KW-0220">Diaminopimelate biosynthesis</keyword>
<keyword id="KW-0456">Lyase</keyword>
<keyword id="KW-0457">Lysine biosynthesis</keyword>
<keyword id="KW-1185">Reference proteome</keyword>
<keyword id="KW-0704">Schiff base</keyword>
<evidence type="ECO:0000255" key="1">
    <source>
        <dbReference type="HAMAP-Rule" id="MF_00418"/>
    </source>
</evidence>
<evidence type="ECO:0000269" key="2">
    <source>
    </source>
</evidence>
<evidence type="ECO:0000305" key="3"/>
<evidence type="ECO:0000305" key="4">
    <source>
    </source>
</evidence>
<evidence type="ECO:0007829" key="5">
    <source>
        <dbReference type="PDB" id="3FLU"/>
    </source>
</evidence>
<name>DAPA_NEIMB</name>
<feature type="chain" id="PRO_0000103131" description="4-hydroxy-tetrahydrodipicolinate synthase">
    <location>
        <begin position="1"/>
        <end position="291"/>
    </location>
</feature>
<feature type="active site" description="Proton donor/acceptor" evidence="1">
    <location>
        <position position="133"/>
    </location>
</feature>
<feature type="active site" description="Schiff-base intermediate with substrate" evidence="1">
    <location>
        <position position="161"/>
    </location>
</feature>
<feature type="binding site" evidence="1">
    <location>
        <position position="45"/>
    </location>
    <ligand>
        <name>pyruvate</name>
        <dbReference type="ChEBI" id="CHEBI:15361"/>
    </ligand>
</feature>
<feature type="binding site" evidence="1">
    <location>
        <position position="203"/>
    </location>
    <ligand>
        <name>pyruvate</name>
        <dbReference type="ChEBI" id="CHEBI:15361"/>
    </ligand>
</feature>
<feature type="site" description="Part of a proton relay during catalysis" evidence="1">
    <location>
        <position position="44"/>
    </location>
</feature>
<feature type="site" description="Part of a proton relay during catalysis" evidence="1">
    <location>
        <position position="107"/>
    </location>
</feature>
<feature type="strand" evidence="5">
    <location>
        <begin position="4"/>
        <end position="8"/>
    </location>
</feature>
<feature type="helix" evidence="5">
    <location>
        <begin position="21"/>
        <end position="33"/>
    </location>
</feature>
<feature type="strand" evidence="5">
    <location>
        <begin position="38"/>
        <end position="43"/>
    </location>
</feature>
<feature type="turn" evidence="5">
    <location>
        <begin position="44"/>
        <end position="47"/>
    </location>
</feature>
<feature type="helix" evidence="5">
    <location>
        <begin position="48"/>
        <end position="50"/>
    </location>
</feature>
<feature type="helix" evidence="5">
    <location>
        <begin position="53"/>
        <end position="67"/>
    </location>
</feature>
<feature type="strand" evidence="5">
    <location>
        <begin position="73"/>
        <end position="76"/>
    </location>
</feature>
<feature type="helix" evidence="5">
    <location>
        <begin position="82"/>
        <end position="94"/>
    </location>
</feature>
<feature type="strand" evidence="5">
    <location>
        <begin position="98"/>
        <end position="103"/>
    </location>
</feature>
<feature type="helix" evidence="5">
    <location>
        <begin position="112"/>
        <end position="125"/>
    </location>
</feature>
<feature type="strand" evidence="5">
    <location>
        <begin position="130"/>
        <end position="134"/>
    </location>
</feature>
<feature type="helix" evidence="5">
    <location>
        <begin position="136"/>
        <end position="139"/>
    </location>
</feature>
<feature type="helix" evidence="5">
    <location>
        <begin position="145"/>
        <end position="151"/>
    </location>
</feature>
<feature type="strand" evidence="5">
    <location>
        <begin position="157"/>
        <end position="162"/>
    </location>
</feature>
<feature type="helix" evidence="5">
    <location>
        <begin position="167"/>
        <end position="176"/>
    </location>
</feature>
<feature type="strand" evidence="5">
    <location>
        <begin position="182"/>
        <end position="185"/>
    </location>
</feature>
<feature type="helix" evidence="5">
    <location>
        <begin position="188"/>
        <end position="190"/>
    </location>
</feature>
<feature type="helix" evidence="5">
    <location>
        <begin position="191"/>
        <end position="196"/>
    </location>
</feature>
<feature type="strand" evidence="5">
    <location>
        <begin position="201"/>
        <end position="205"/>
    </location>
</feature>
<feature type="helix" evidence="5">
    <location>
        <begin position="206"/>
        <end position="208"/>
    </location>
</feature>
<feature type="helix" evidence="5">
    <location>
        <begin position="211"/>
        <end position="223"/>
    </location>
</feature>
<feature type="helix" evidence="5">
    <location>
        <begin position="226"/>
        <end position="240"/>
    </location>
</feature>
<feature type="turn" evidence="5">
    <location>
        <begin position="241"/>
        <end position="244"/>
    </location>
</feature>
<feature type="strand" evidence="5">
    <location>
        <begin position="245"/>
        <end position="247"/>
    </location>
</feature>
<feature type="helix" evidence="5">
    <location>
        <begin position="250"/>
        <end position="258"/>
    </location>
</feature>
<feature type="helix" evidence="5">
    <location>
        <begin position="275"/>
        <end position="287"/>
    </location>
</feature>
<reference key="1">
    <citation type="journal article" date="2000" name="Science">
        <title>Complete genome sequence of Neisseria meningitidis serogroup B strain MC58.</title>
        <authorList>
            <person name="Tettelin H."/>
            <person name="Saunders N.J."/>
            <person name="Heidelberg J.F."/>
            <person name="Jeffries A.C."/>
            <person name="Nelson K.E."/>
            <person name="Eisen J.A."/>
            <person name="Ketchum K.A."/>
            <person name="Hood D.W."/>
            <person name="Peden J.F."/>
            <person name="Dodson R.J."/>
            <person name="Nelson W.C."/>
            <person name="Gwinn M.L."/>
            <person name="DeBoy R.T."/>
            <person name="Peterson J.D."/>
            <person name="Hickey E.K."/>
            <person name="Haft D.H."/>
            <person name="Salzberg S.L."/>
            <person name="White O."/>
            <person name="Fleischmann R.D."/>
            <person name="Dougherty B.A."/>
            <person name="Mason T.M."/>
            <person name="Ciecko A."/>
            <person name="Parksey D.S."/>
            <person name="Blair E."/>
            <person name="Cittone H."/>
            <person name="Clark E.B."/>
            <person name="Cotton M.D."/>
            <person name="Utterback T.R."/>
            <person name="Khouri H.M."/>
            <person name="Qin H."/>
            <person name="Vamathevan J.J."/>
            <person name="Gill J."/>
            <person name="Scarlato V."/>
            <person name="Masignani V."/>
            <person name="Pizza M."/>
            <person name="Grandi G."/>
            <person name="Sun L."/>
            <person name="Smith H.O."/>
            <person name="Fraser C.M."/>
            <person name="Moxon E.R."/>
            <person name="Rappuoli R."/>
            <person name="Venter J.C."/>
        </authorList>
    </citation>
    <scope>NUCLEOTIDE SEQUENCE [LARGE SCALE GENOMIC DNA]</scope>
    <source>
        <strain>ATCC BAA-335 / MC58</strain>
    </source>
</reference>
<reference key="2">
    <citation type="journal article" date="2009" name="Biochim. Biophys. Acta">
        <title>Cloning and characterisation of dihydrodipicolinate synthase from the pathogen Neisseria meningitidis.</title>
        <authorList>
            <person name="Devenish S.R."/>
            <person name="Huisman F.H."/>
            <person name="Parker E.J."/>
            <person name="Hadfield A.T."/>
            <person name="Gerrard J.A."/>
        </authorList>
    </citation>
    <scope>X-RAY CRYSTALLOGRAPHY (2.0 ANGSTROMS)</scope>
    <scope>FUNCTION</scope>
    <scope>KINETIC PARAMETERS</scope>
    <scope>ACTIVITY REGULATION</scope>
    <scope>IDENTIFICATION BY MASS SPECTROMETRY</scope>
    <scope>SUBUNIT</scope>
    <source>
        <strain>ATCC BAA-335 / MC58</strain>
    </source>
</reference>
<sequence>MLQGSLVALITPMNQDGSIHYEQLRDLIDWHIENGTDGIVAVGTTGESATLSVEEHTAVIEAVVKHVAKRVPVIAGTGANNTVEAIALSQAAEKAGADYTLSVVPYYNKPSQEGIYQHFKTIAEATSIPMIIYNVPGRTVVSMTNDTILRLAEIPNIVGVKEASGNIGSNIELINRAPEGFVVLSGDDHTALPFMLCGGHGVITVAANAAPKLFADMCRAALQGDIALARELNDRLIPIYDTMFCEPSPAAPKWAVSALGRCEPHVRLPLVPLTENGQAKVRAALKASGQL</sequence>
<accession>Q9JZR4</accession>
<proteinExistence type="evidence at protein level"/>
<organism>
    <name type="scientific">Neisseria meningitidis serogroup B (strain ATCC BAA-335 / MC58)</name>
    <dbReference type="NCBI Taxonomy" id="122586"/>
    <lineage>
        <taxon>Bacteria</taxon>
        <taxon>Pseudomonadati</taxon>
        <taxon>Pseudomonadota</taxon>
        <taxon>Betaproteobacteria</taxon>
        <taxon>Neisseriales</taxon>
        <taxon>Neisseriaceae</taxon>
        <taxon>Neisseria</taxon>
    </lineage>
</organism>
<protein>
    <recommendedName>
        <fullName evidence="1">4-hydroxy-tetrahydrodipicolinate synthase</fullName>
        <shortName evidence="1">HTPA synthase</shortName>
        <ecNumber evidence="1">4.3.3.7</ecNumber>
    </recommendedName>
</protein>